<geneLocation type="chloroplast"/>
<reference key="1">
    <citation type="submission" date="2005-03" db="EMBL/GenBank/DDBJ databases">
        <title>Complete structure of the chloroplast genome of Populus alba.</title>
        <authorList>
            <person name="Okumura S."/>
            <person name="Yamashita A."/>
            <person name="Kanamoto H."/>
            <person name="Hattori M."/>
            <person name="Takase H."/>
            <person name="Tomizawa K."/>
        </authorList>
    </citation>
    <scope>NUCLEOTIDE SEQUENCE [LARGE SCALE GENOMIC DNA]</scope>
</reference>
<comment type="function">
    <text evidence="1">One of the components of the core complex of photosystem II (PSII). It binds chlorophyll and helps catalyze the primary light-induced photochemical processes of PSII. PSII is a light-driven water:plastoquinone oxidoreductase, using light energy to abstract electrons from H(2)O, generating O(2) and a proton gradient subsequently used for ATP formation.</text>
</comment>
<comment type="cofactor">
    <text evidence="1">Binds multiple chlorophylls and provides some of the ligands for the Ca-4Mn-5O cluster of the oxygen-evolving complex. It may also provide a ligand for a Cl- that is required for oxygen evolution. PSII binds additional chlorophylls, carotenoids and specific lipids.</text>
</comment>
<comment type="subunit">
    <text evidence="1">PSII is composed of 1 copy each of membrane proteins PsbA, PsbB, PsbC, PsbD, PsbE, PsbF, PsbH, PsbI, PsbJ, PsbK, PsbL, PsbM, PsbT, PsbX, PsbY, PsbZ, Psb30/Ycf12, at least 3 peripheral proteins of the oxygen-evolving complex and a large number of cofactors. It forms dimeric complexes.</text>
</comment>
<comment type="subcellular location">
    <subcellularLocation>
        <location evidence="1">Plastid</location>
        <location evidence="1">Chloroplast thylakoid membrane</location>
        <topology evidence="1">Multi-pass membrane protein</topology>
    </subcellularLocation>
</comment>
<comment type="similarity">
    <text evidence="1">Belongs to the PsbB/PsbC family. PsbC subfamily.</text>
</comment>
<feature type="propeptide" id="PRO_0000431199" evidence="1">
    <location>
        <begin position="1"/>
        <end position="14"/>
    </location>
</feature>
<feature type="chain" id="PRO_0000361479" description="Photosystem II CP43 reaction center protein" evidence="1">
    <location>
        <begin position="15"/>
        <end position="473"/>
    </location>
</feature>
<feature type="transmembrane region" description="Helical" evidence="1">
    <location>
        <begin position="69"/>
        <end position="93"/>
    </location>
</feature>
<feature type="transmembrane region" description="Helical" evidence="1">
    <location>
        <begin position="134"/>
        <end position="155"/>
    </location>
</feature>
<feature type="transmembrane region" description="Helical" evidence="1">
    <location>
        <begin position="178"/>
        <end position="200"/>
    </location>
</feature>
<feature type="transmembrane region" description="Helical" evidence="1">
    <location>
        <begin position="255"/>
        <end position="275"/>
    </location>
</feature>
<feature type="transmembrane region" description="Helical" evidence="1">
    <location>
        <begin position="291"/>
        <end position="312"/>
    </location>
</feature>
<feature type="transmembrane region" description="Helical" evidence="1">
    <location>
        <begin position="447"/>
        <end position="471"/>
    </location>
</feature>
<feature type="binding site" evidence="1">
    <location>
        <position position="367"/>
    </location>
    <ligand>
        <name>[CaMn4O5] cluster</name>
        <dbReference type="ChEBI" id="CHEBI:189552"/>
    </ligand>
</feature>
<feature type="modified residue" description="N-acetylthreonine" evidence="1">
    <location>
        <position position="15"/>
    </location>
</feature>
<feature type="modified residue" description="Phosphothreonine" evidence="1">
    <location>
        <position position="15"/>
    </location>
</feature>
<protein>
    <recommendedName>
        <fullName evidence="1">Photosystem II CP43 reaction center protein</fullName>
    </recommendedName>
    <alternativeName>
        <fullName evidence="1">PSII 43 kDa protein</fullName>
    </alternativeName>
    <alternativeName>
        <fullName evidence="1">Protein CP-43</fullName>
    </alternativeName>
</protein>
<sequence>MKTLYSLRRFYPVETLFNGTLALAGRDQETTGFAWWAGNARLINLSGKLLGAHVAHAGLIVFWAGAMNLFEVAHFVPEKPMYEQGLILLPHLATLGWGVGPGGEVIDTFPYFVSGVLHLISSAVLGFGGIYHALLGPETLEESFPFFGYVWKDRNKMTTILGIHLILLGIGAFLLVFKALYFGGVYDTWAPGGGDVRKITNLTLSPSVIFGYLLKSPFGGEGWIVSVDDLEDIIGGHVWLGSICILGGIWHILTKPFAWARRALVWSGEAYLSYSLGALAVFGFIACCFVWFNNTAYPSEFYGPTGPEASQAQAFTFLVRDQRLGANVGSAQGPTGLGKYLMRSPTGEVIFGGETMRFWDLRAPWLEPLRGPNGLDLSRLKKDIQPWQERRSAEYMTHAPLGSLNSVGGVATEINAVNYVSPRSWLATSHFVLGFFLFVGHLWHAGRARAAAAGFEKGIDRDFEPVLSMTPLN</sequence>
<gene>
    <name evidence="1" type="primary">psbC</name>
</gene>
<accession>Q14FG1</accession>
<name>PSBC_POPAL</name>
<keyword id="KW-0007">Acetylation</keyword>
<keyword id="KW-0148">Chlorophyll</keyword>
<keyword id="KW-0150">Chloroplast</keyword>
<keyword id="KW-0157">Chromophore</keyword>
<keyword id="KW-0464">Manganese</keyword>
<keyword id="KW-0472">Membrane</keyword>
<keyword id="KW-0479">Metal-binding</keyword>
<keyword id="KW-0597">Phosphoprotein</keyword>
<keyword id="KW-0602">Photosynthesis</keyword>
<keyword id="KW-0604">Photosystem II</keyword>
<keyword id="KW-0934">Plastid</keyword>
<keyword id="KW-0793">Thylakoid</keyword>
<keyword id="KW-0812">Transmembrane</keyword>
<keyword id="KW-1133">Transmembrane helix</keyword>
<proteinExistence type="inferred from homology"/>
<evidence type="ECO:0000255" key="1">
    <source>
        <dbReference type="HAMAP-Rule" id="MF_01496"/>
    </source>
</evidence>
<dbReference type="EMBL" id="AP008956">
    <property type="protein sequence ID" value="BAE97201.1"/>
    <property type="molecule type" value="Genomic_DNA"/>
</dbReference>
<dbReference type="RefSeq" id="YP_665554.1">
    <property type="nucleotide sequence ID" value="NC_008235.1"/>
</dbReference>
<dbReference type="SMR" id="Q14FG1"/>
<dbReference type="GeneID" id="4178160"/>
<dbReference type="KEGG" id="palz:4178160"/>
<dbReference type="OrthoDB" id="7109at3646"/>
<dbReference type="GO" id="GO:0009535">
    <property type="term" value="C:chloroplast thylakoid membrane"/>
    <property type="evidence" value="ECO:0007669"/>
    <property type="project" value="UniProtKB-SubCell"/>
</dbReference>
<dbReference type="GO" id="GO:0009523">
    <property type="term" value="C:photosystem II"/>
    <property type="evidence" value="ECO:0007669"/>
    <property type="project" value="UniProtKB-KW"/>
</dbReference>
<dbReference type="GO" id="GO:0016168">
    <property type="term" value="F:chlorophyll binding"/>
    <property type="evidence" value="ECO:0007669"/>
    <property type="project" value="UniProtKB-UniRule"/>
</dbReference>
<dbReference type="GO" id="GO:0045156">
    <property type="term" value="F:electron transporter, transferring electrons within the cyclic electron transport pathway of photosynthesis activity"/>
    <property type="evidence" value="ECO:0007669"/>
    <property type="project" value="InterPro"/>
</dbReference>
<dbReference type="GO" id="GO:0046872">
    <property type="term" value="F:metal ion binding"/>
    <property type="evidence" value="ECO:0007669"/>
    <property type="project" value="UniProtKB-KW"/>
</dbReference>
<dbReference type="GO" id="GO:0009772">
    <property type="term" value="P:photosynthetic electron transport in photosystem II"/>
    <property type="evidence" value="ECO:0007669"/>
    <property type="project" value="InterPro"/>
</dbReference>
<dbReference type="FunFam" id="1.10.10.670:FF:000001">
    <property type="entry name" value="Photosystem II CP43 reaction center protein"/>
    <property type="match status" value="1"/>
</dbReference>
<dbReference type="Gene3D" id="1.10.10.670">
    <property type="entry name" value="photosystem ii from thermosynechococcus elongatus"/>
    <property type="match status" value="1"/>
</dbReference>
<dbReference type="HAMAP" id="MF_01496">
    <property type="entry name" value="PSII_PsbC_CP43"/>
    <property type="match status" value="1"/>
</dbReference>
<dbReference type="InterPro" id="IPR000932">
    <property type="entry name" value="PS_antenna-like"/>
</dbReference>
<dbReference type="InterPro" id="IPR036001">
    <property type="entry name" value="PS_II_antenna-like_sf"/>
</dbReference>
<dbReference type="InterPro" id="IPR005869">
    <property type="entry name" value="PSII_PsbC"/>
</dbReference>
<dbReference type="InterPro" id="IPR044900">
    <property type="entry name" value="PSII_PsbC_sf"/>
</dbReference>
<dbReference type="NCBIfam" id="TIGR01153">
    <property type="entry name" value="psbC"/>
    <property type="match status" value="1"/>
</dbReference>
<dbReference type="Pfam" id="PF00421">
    <property type="entry name" value="PSII"/>
    <property type="match status" value="1"/>
</dbReference>
<dbReference type="SUPFAM" id="SSF161077">
    <property type="entry name" value="Photosystem II antenna protein-like"/>
    <property type="match status" value="1"/>
</dbReference>
<organism>
    <name type="scientific">Populus alba</name>
    <name type="common">White poplar</name>
    <dbReference type="NCBI Taxonomy" id="43335"/>
    <lineage>
        <taxon>Eukaryota</taxon>
        <taxon>Viridiplantae</taxon>
        <taxon>Streptophyta</taxon>
        <taxon>Embryophyta</taxon>
        <taxon>Tracheophyta</taxon>
        <taxon>Spermatophyta</taxon>
        <taxon>Magnoliopsida</taxon>
        <taxon>eudicotyledons</taxon>
        <taxon>Gunneridae</taxon>
        <taxon>Pentapetalae</taxon>
        <taxon>rosids</taxon>
        <taxon>fabids</taxon>
        <taxon>Malpighiales</taxon>
        <taxon>Salicaceae</taxon>
        <taxon>Saliceae</taxon>
        <taxon>Populus</taxon>
    </lineage>
</organism>